<gene>
    <name evidence="1" type="primary">obg</name>
    <name type="ordered locus">BF1121</name>
</gene>
<organism>
    <name type="scientific">Bacteroides fragilis (strain YCH46)</name>
    <dbReference type="NCBI Taxonomy" id="295405"/>
    <lineage>
        <taxon>Bacteria</taxon>
        <taxon>Pseudomonadati</taxon>
        <taxon>Bacteroidota</taxon>
        <taxon>Bacteroidia</taxon>
        <taxon>Bacteroidales</taxon>
        <taxon>Bacteroidaceae</taxon>
        <taxon>Bacteroides</taxon>
    </lineage>
</organism>
<proteinExistence type="inferred from homology"/>
<accession>Q64XA5</accession>
<evidence type="ECO:0000255" key="1">
    <source>
        <dbReference type="HAMAP-Rule" id="MF_01454"/>
    </source>
</evidence>
<evidence type="ECO:0000255" key="2">
    <source>
        <dbReference type="PROSITE-ProRule" id="PRU01231"/>
    </source>
</evidence>
<evidence type="ECO:0000256" key="3">
    <source>
        <dbReference type="SAM" id="MobiDB-lite"/>
    </source>
</evidence>
<name>OBG_BACFR</name>
<reference key="1">
    <citation type="journal article" date="2004" name="Proc. Natl. Acad. Sci. U.S.A.">
        <title>Genomic analysis of Bacteroides fragilis reveals extensive DNA inversions regulating cell surface adaptation.</title>
        <authorList>
            <person name="Kuwahara T."/>
            <person name="Yamashita A."/>
            <person name="Hirakawa H."/>
            <person name="Nakayama H."/>
            <person name="Toh H."/>
            <person name="Okada N."/>
            <person name="Kuhara S."/>
            <person name="Hattori M."/>
            <person name="Hayashi T."/>
            <person name="Ohnishi Y."/>
        </authorList>
    </citation>
    <scope>NUCLEOTIDE SEQUENCE [LARGE SCALE GENOMIC DNA]</scope>
    <source>
        <strain>YCH46</strain>
    </source>
</reference>
<comment type="function">
    <text evidence="1">An essential GTPase which binds GTP, GDP and possibly (p)ppGpp with moderate affinity, with high nucleotide exchange rates and a fairly low GTP hydrolysis rate. Plays a role in control of the cell cycle, stress response, ribosome biogenesis and in those bacteria that undergo differentiation, in morphogenesis control.</text>
</comment>
<comment type="cofactor">
    <cofactor evidence="1">
        <name>Mg(2+)</name>
        <dbReference type="ChEBI" id="CHEBI:18420"/>
    </cofactor>
</comment>
<comment type="subunit">
    <text evidence="1">Monomer.</text>
</comment>
<comment type="subcellular location">
    <subcellularLocation>
        <location evidence="1">Cytoplasm</location>
    </subcellularLocation>
</comment>
<comment type="similarity">
    <text evidence="1">Belongs to the TRAFAC class OBG-HflX-like GTPase superfamily. OBG GTPase family.</text>
</comment>
<feature type="chain" id="PRO_0000385731" description="GTPase Obg">
    <location>
        <begin position="1"/>
        <end position="386"/>
    </location>
</feature>
<feature type="domain" description="Obg" evidence="2">
    <location>
        <begin position="4"/>
        <end position="162"/>
    </location>
</feature>
<feature type="domain" description="OBG-type G" evidence="1">
    <location>
        <begin position="163"/>
        <end position="329"/>
    </location>
</feature>
<feature type="region of interest" description="Disordered" evidence="3">
    <location>
        <begin position="18"/>
        <end position="45"/>
    </location>
</feature>
<feature type="region of interest" description="Disordered" evidence="3">
    <location>
        <begin position="351"/>
        <end position="386"/>
    </location>
</feature>
<feature type="compositionally biased region" description="Gly residues" evidence="3">
    <location>
        <begin position="36"/>
        <end position="45"/>
    </location>
</feature>
<feature type="compositionally biased region" description="Acidic residues" evidence="3">
    <location>
        <begin position="356"/>
        <end position="386"/>
    </location>
</feature>
<feature type="binding site" evidence="1">
    <location>
        <begin position="169"/>
        <end position="176"/>
    </location>
    <ligand>
        <name>GTP</name>
        <dbReference type="ChEBI" id="CHEBI:37565"/>
    </ligand>
</feature>
<feature type="binding site" evidence="1">
    <location>
        <position position="176"/>
    </location>
    <ligand>
        <name>Mg(2+)</name>
        <dbReference type="ChEBI" id="CHEBI:18420"/>
    </ligand>
</feature>
<feature type="binding site" evidence="1">
    <location>
        <begin position="194"/>
        <end position="198"/>
    </location>
    <ligand>
        <name>GTP</name>
        <dbReference type="ChEBI" id="CHEBI:37565"/>
    </ligand>
</feature>
<feature type="binding site" evidence="1">
    <location>
        <position position="196"/>
    </location>
    <ligand>
        <name>Mg(2+)</name>
        <dbReference type="ChEBI" id="CHEBI:18420"/>
    </ligand>
</feature>
<feature type="binding site" evidence="1">
    <location>
        <begin position="216"/>
        <end position="219"/>
    </location>
    <ligand>
        <name>GTP</name>
        <dbReference type="ChEBI" id="CHEBI:37565"/>
    </ligand>
</feature>
<feature type="binding site" evidence="1">
    <location>
        <begin position="283"/>
        <end position="286"/>
    </location>
    <ligand>
        <name>GTP</name>
        <dbReference type="ChEBI" id="CHEBI:37565"/>
    </ligand>
</feature>
<feature type="binding site" evidence="1">
    <location>
        <begin position="310"/>
        <end position="312"/>
    </location>
    <ligand>
        <name>GTP</name>
        <dbReference type="ChEBI" id="CHEBI:37565"/>
    </ligand>
</feature>
<protein>
    <recommendedName>
        <fullName evidence="1">GTPase Obg</fullName>
        <ecNumber evidence="1">3.6.5.-</ecNumber>
    </recommendedName>
    <alternativeName>
        <fullName evidence="1">GTP-binding protein Obg</fullName>
    </alternativeName>
</protein>
<keyword id="KW-0963">Cytoplasm</keyword>
<keyword id="KW-0342">GTP-binding</keyword>
<keyword id="KW-0378">Hydrolase</keyword>
<keyword id="KW-0460">Magnesium</keyword>
<keyword id="KW-0479">Metal-binding</keyword>
<keyword id="KW-0547">Nucleotide-binding</keyword>
<dbReference type="EC" id="3.6.5.-" evidence="1"/>
<dbReference type="EMBL" id="AP006841">
    <property type="protein sequence ID" value="BAD47871.1"/>
    <property type="molecule type" value="Genomic_DNA"/>
</dbReference>
<dbReference type="RefSeq" id="YP_098405.1">
    <property type="nucleotide sequence ID" value="NC_006347.1"/>
</dbReference>
<dbReference type="SMR" id="Q64XA5"/>
<dbReference type="STRING" id="295405.BF1121"/>
<dbReference type="KEGG" id="bfr:BF1121"/>
<dbReference type="PATRIC" id="fig|295405.11.peg.1110"/>
<dbReference type="HOGENOM" id="CLU_011747_2_0_10"/>
<dbReference type="OrthoDB" id="9807318at2"/>
<dbReference type="Proteomes" id="UP000002197">
    <property type="component" value="Chromosome"/>
</dbReference>
<dbReference type="GO" id="GO:0005737">
    <property type="term" value="C:cytoplasm"/>
    <property type="evidence" value="ECO:0007669"/>
    <property type="project" value="UniProtKB-SubCell"/>
</dbReference>
<dbReference type="GO" id="GO:0005525">
    <property type="term" value="F:GTP binding"/>
    <property type="evidence" value="ECO:0007669"/>
    <property type="project" value="UniProtKB-UniRule"/>
</dbReference>
<dbReference type="GO" id="GO:0003924">
    <property type="term" value="F:GTPase activity"/>
    <property type="evidence" value="ECO:0007669"/>
    <property type="project" value="UniProtKB-UniRule"/>
</dbReference>
<dbReference type="GO" id="GO:0000287">
    <property type="term" value="F:magnesium ion binding"/>
    <property type="evidence" value="ECO:0007669"/>
    <property type="project" value="InterPro"/>
</dbReference>
<dbReference type="GO" id="GO:0042254">
    <property type="term" value="P:ribosome biogenesis"/>
    <property type="evidence" value="ECO:0007669"/>
    <property type="project" value="UniProtKB-UniRule"/>
</dbReference>
<dbReference type="CDD" id="cd01898">
    <property type="entry name" value="Obg"/>
    <property type="match status" value="1"/>
</dbReference>
<dbReference type="FunFam" id="2.70.210.12:FF:000001">
    <property type="entry name" value="GTPase Obg"/>
    <property type="match status" value="1"/>
</dbReference>
<dbReference type="Gene3D" id="2.70.210.12">
    <property type="entry name" value="GTP1/OBG domain"/>
    <property type="match status" value="1"/>
</dbReference>
<dbReference type="Gene3D" id="3.40.50.300">
    <property type="entry name" value="P-loop containing nucleotide triphosphate hydrolases"/>
    <property type="match status" value="1"/>
</dbReference>
<dbReference type="HAMAP" id="MF_01454">
    <property type="entry name" value="GTPase_Obg"/>
    <property type="match status" value="1"/>
</dbReference>
<dbReference type="InterPro" id="IPR031167">
    <property type="entry name" value="G_OBG"/>
</dbReference>
<dbReference type="InterPro" id="IPR006073">
    <property type="entry name" value="GTP-bd"/>
</dbReference>
<dbReference type="InterPro" id="IPR014100">
    <property type="entry name" value="GTP-bd_Obg/CgtA"/>
</dbReference>
<dbReference type="InterPro" id="IPR006074">
    <property type="entry name" value="GTP1-OBG_CS"/>
</dbReference>
<dbReference type="InterPro" id="IPR006169">
    <property type="entry name" value="GTP1_OBG_dom"/>
</dbReference>
<dbReference type="InterPro" id="IPR036726">
    <property type="entry name" value="GTP1_OBG_dom_sf"/>
</dbReference>
<dbReference type="InterPro" id="IPR045086">
    <property type="entry name" value="OBG_GTPase"/>
</dbReference>
<dbReference type="InterPro" id="IPR027417">
    <property type="entry name" value="P-loop_NTPase"/>
</dbReference>
<dbReference type="NCBIfam" id="TIGR02729">
    <property type="entry name" value="Obg_CgtA"/>
    <property type="match status" value="1"/>
</dbReference>
<dbReference type="NCBIfam" id="NF008955">
    <property type="entry name" value="PRK12297.1"/>
    <property type="match status" value="1"/>
</dbReference>
<dbReference type="NCBIfam" id="NF008956">
    <property type="entry name" value="PRK12299.1"/>
    <property type="match status" value="1"/>
</dbReference>
<dbReference type="PANTHER" id="PTHR11702">
    <property type="entry name" value="DEVELOPMENTALLY REGULATED GTP-BINDING PROTEIN-RELATED"/>
    <property type="match status" value="1"/>
</dbReference>
<dbReference type="PANTHER" id="PTHR11702:SF31">
    <property type="entry name" value="MITOCHONDRIAL RIBOSOME-ASSOCIATED GTPASE 2"/>
    <property type="match status" value="1"/>
</dbReference>
<dbReference type="Pfam" id="PF01018">
    <property type="entry name" value="GTP1_OBG"/>
    <property type="match status" value="1"/>
</dbReference>
<dbReference type="Pfam" id="PF01926">
    <property type="entry name" value="MMR_HSR1"/>
    <property type="match status" value="1"/>
</dbReference>
<dbReference type="PIRSF" id="PIRSF002401">
    <property type="entry name" value="GTP_bd_Obg/CgtA"/>
    <property type="match status" value="1"/>
</dbReference>
<dbReference type="PRINTS" id="PR00326">
    <property type="entry name" value="GTP1OBG"/>
</dbReference>
<dbReference type="SUPFAM" id="SSF82051">
    <property type="entry name" value="Obg GTP-binding protein N-terminal domain"/>
    <property type="match status" value="1"/>
</dbReference>
<dbReference type="SUPFAM" id="SSF52540">
    <property type="entry name" value="P-loop containing nucleoside triphosphate hydrolases"/>
    <property type="match status" value="1"/>
</dbReference>
<dbReference type="PROSITE" id="PS51710">
    <property type="entry name" value="G_OBG"/>
    <property type="match status" value="1"/>
</dbReference>
<dbReference type="PROSITE" id="PS00905">
    <property type="entry name" value="GTP1_OBG"/>
    <property type="match status" value="1"/>
</dbReference>
<dbReference type="PROSITE" id="PS51883">
    <property type="entry name" value="OBG"/>
    <property type="match status" value="1"/>
</dbReference>
<sequence>MAESNFVDYVKIYCRSGKGGRGSTHMRREKYTPNGGPDGGDGGRGGHVILRGNRNYWTLLHLRYDRHAMAGHGESGSKNRSFGKDGADKIIEVPCGTVVYNAETGEYVCDVTEHGQEVILLKGGRGGLGNWHFKTATRQAPRFAQPGEPMQEMTVILELKLLADVGLVGFPNAGKSTLLSAISAAKPKIADYPFTTLEPNLGIVSYRDGQSFVMADIPGIIEGASEGKGLGLRFLRHIERNSLLLFMIPADSDDIRKDYEVLLNELKTFNPEMLDKQRVLAITKSDMLDQELMDEIEPTLPEGIPHVFISSVSGLGISVLKDILWTELNKESNKIEAIVHRPKDVSRLQQELKDMGEDEELDYEYEDDGDEDDLDYEYEEEDWEDK</sequence>